<reference key="1">
    <citation type="submission" date="2008-04" db="EMBL/GenBank/DDBJ databases">
        <title>Complete sequence of Yersinia pseudotuberculosis PB1/+.</title>
        <authorList>
            <person name="Copeland A."/>
            <person name="Lucas S."/>
            <person name="Lapidus A."/>
            <person name="Glavina del Rio T."/>
            <person name="Dalin E."/>
            <person name="Tice H."/>
            <person name="Bruce D."/>
            <person name="Goodwin L."/>
            <person name="Pitluck S."/>
            <person name="Munk A.C."/>
            <person name="Brettin T."/>
            <person name="Detter J.C."/>
            <person name="Han C."/>
            <person name="Tapia R."/>
            <person name="Schmutz J."/>
            <person name="Larimer F."/>
            <person name="Land M."/>
            <person name="Hauser L."/>
            <person name="Challacombe J.F."/>
            <person name="Green L."/>
            <person name="Lindler L.E."/>
            <person name="Nikolich M.P."/>
            <person name="Richardson P."/>
        </authorList>
    </citation>
    <scope>NUCLEOTIDE SEQUENCE [LARGE SCALE GENOMIC DNA]</scope>
    <source>
        <strain>PB1/+</strain>
    </source>
</reference>
<feature type="chain" id="PRO_1000142744" description="Large ribosomal subunit protein uL18">
    <location>
        <begin position="1"/>
        <end position="117"/>
    </location>
</feature>
<evidence type="ECO:0000255" key="1">
    <source>
        <dbReference type="HAMAP-Rule" id="MF_01337"/>
    </source>
</evidence>
<evidence type="ECO:0000305" key="2"/>
<organism>
    <name type="scientific">Yersinia pseudotuberculosis serotype IB (strain PB1/+)</name>
    <dbReference type="NCBI Taxonomy" id="502801"/>
    <lineage>
        <taxon>Bacteria</taxon>
        <taxon>Pseudomonadati</taxon>
        <taxon>Pseudomonadota</taxon>
        <taxon>Gammaproteobacteria</taxon>
        <taxon>Enterobacterales</taxon>
        <taxon>Yersiniaceae</taxon>
        <taxon>Yersinia</taxon>
    </lineage>
</organism>
<protein>
    <recommendedName>
        <fullName evidence="1">Large ribosomal subunit protein uL18</fullName>
    </recommendedName>
    <alternativeName>
        <fullName evidence="2">50S ribosomal protein L18</fullName>
    </alternativeName>
</protein>
<proteinExistence type="inferred from homology"/>
<name>RL18_YERPB</name>
<keyword id="KW-0687">Ribonucleoprotein</keyword>
<keyword id="KW-0689">Ribosomal protein</keyword>
<keyword id="KW-0694">RNA-binding</keyword>
<keyword id="KW-0699">rRNA-binding</keyword>
<gene>
    <name evidence="1" type="primary">rplR</name>
    <name type="ordered locus">YPTS_3874</name>
</gene>
<comment type="function">
    <text evidence="1">This is one of the proteins that bind and probably mediate the attachment of the 5S RNA into the large ribosomal subunit, where it forms part of the central protuberance.</text>
</comment>
<comment type="subunit">
    <text evidence="1">Part of the 50S ribosomal subunit; part of the 5S rRNA/L5/L18/L25 subcomplex. Contacts the 5S and 23S rRNAs.</text>
</comment>
<comment type="similarity">
    <text evidence="1">Belongs to the universal ribosomal protein uL18 family.</text>
</comment>
<dbReference type="EMBL" id="CP001048">
    <property type="protein sequence ID" value="ACC90823.1"/>
    <property type="molecule type" value="Genomic_DNA"/>
</dbReference>
<dbReference type="RefSeq" id="WP_002213336.1">
    <property type="nucleotide sequence ID" value="NZ_CP009780.1"/>
</dbReference>
<dbReference type="SMR" id="B2K521"/>
<dbReference type="GeneID" id="97454247"/>
<dbReference type="KEGG" id="ypb:YPTS_3874"/>
<dbReference type="PATRIC" id="fig|502801.10.peg.3339"/>
<dbReference type="GO" id="GO:0022625">
    <property type="term" value="C:cytosolic large ribosomal subunit"/>
    <property type="evidence" value="ECO:0007669"/>
    <property type="project" value="TreeGrafter"/>
</dbReference>
<dbReference type="GO" id="GO:0008097">
    <property type="term" value="F:5S rRNA binding"/>
    <property type="evidence" value="ECO:0007669"/>
    <property type="project" value="TreeGrafter"/>
</dbReference>
<dbReference type="GO" id="GO:0003735">
    <property type="term" value="F:structural constituent of ribosome"/>
    <property type="evidence" value="ECO:0007669"/>
    <property type="project" value="InterPro"/>
</dbReference>
<dbReference type="GO" id="GO:0006412">
    <property type="term" value="P:translation"/>
    <property type="evidence" value="ECO:0007669"/>
    <property type="project" value="UniProtKB-UniRule"/>
</dbReference>
<dbReference type="CDD" id="cd00432">
    <property type="entry name" value="Ribosomal_L18_L5e"/>
    <property type="match status" value="1"/>
</dbReference>
<dbReference type="FunFam" id="3.30.420.100:FF:000001">
    <property type="entry name" value="50S ribosomal protein L18"/>
    <property type="match status" value="1"/>
</dbReference>
<dbReference type="Gene3D" id="3.30.420.100">
    <property type="match status" value="1"/>
</dbReference>
<dbReference type="HAMAP" id="MF_01337_B">
    <property type="entry name" value="Ribosomal_uL18_B"/>
    <property type="match status" value="1"/>
</dbReference>
<dbReference type="InterPro" id="IPR004389">
    <property type="entry name" value="Ribosomal_uL18_bac-type"/>
</dbReference>
<dbReference type="InterPro" id="IPR005484">
    <property type="entry name" value="Ribosomal_uL18_bac/euk"/>
</dbReference>
<dbReference type="NCBIfam" id="TIGR00060">
    <property type="entry name" value="L18_bact"/>
    <property type="match status" value="1"/>
</dbReference>
<dbReference type="PANTHER" id="PTHR12899">
    <property type="entry name" value="39S RIBOSOMAL PROTEIN L18, MITOCHONDRIAL"/>
    <property type="match status" value="1"/>
</dbReference>
<dbReference type="PANTHER" id="PTHR12899:SF3">
    <property type="entry name" value="LARGE RIBOSOMAL SUBUNIT PROTEIN UL18M"/>
    <property type="match status" value="1"/>
</dbReference>
<dbReference type="Pfam" id="PF00861">
    <property type="entry name" value="Ribosomal_L18p"/>
    <property type="match status" value="1"/>
</dbReference>
<dbReference type="SUPFAM" id="SSF53137">
    <property type="entry name" value="Translational machinery components"/>
    <property type="match status" value="1"/>
</dbReference>
<sequence length="117" mass="12811">MDKKAARIRRATRARRKLKELGATRLVVHRTPRHIYAQVIAPNGSEILVAASTVEKAINEQLKYAGNKDAAAAVGKTIAERALEKGITKVSFDRSGFQYHGRVQALADAAREAGLQF</sequence>
<accession>B2K521</accession>